<protein>
    <recommendedName>
        <fullName evidence="1">tRNA modification GTPase MnmE</fullName>
        <ecNumber evidence="1">3.6.-.-</ecNumber>
    </recommendedName>
</protein>
<gene>
    <name evidence="1" type="primary">mnmE</name>
    <name evidence="1" type="synonym">thdF</name>
    <name evidence="1" type="synonym">trmE</name>
    <name type="ordered locus">YPO4103</name>
    <name type="ordered locus">y4118</name>
    <name type="ordered locus">YP_4010</name>
</gene>
<reference key="1">
    <citation type="journal article" date="2001" name="Nature">
        <title>Genome sequence of Yersinia pestis, the causative agent of plague.</title>
        <authorList>
            <person name="Parkhill J."/>
            <person name="Wren B.W."/>
            <person name="Thomson N.R."/>
            <person name="Titball R.W."/>
            <person name="Holden M.T.G."/>
            <person name="Prentice M.B."/>
            <person name="Sebaihia M."/>
            <person name="James K.D."/>
            <person name="Churcher C.M."/>
            <person name="Mungall K.L."/>
            <person name="Baker S."/>
            <person name="Basham D."/>
            <person name="Bentley S.D."/>
            <person name="Brooks K."/>
            <person name="Cerdeno-Tarraga A.-M."/>
            <person name="Chillingworth T."/>
            <person name="Cronin A."/>
            <person name="Davies R.M."/>
            <person name="Davis P."/>
            <person name="Dougan G."/>
            <person name="Feltwell T."/>
            <person name="Hamlin N."/>
            <person name="Holroyd S."/>
            <person name="Jagels K."/>
            <person name="Karlyshev A.V."/>
            <person name="Leather S."/>
            <person name="Moule S."/>
            <person name="Oyston P.C.F."/>
            <person name="Quail M.A."/>
            <person name="Rutherford K.M."/>
            <person name="Simmonds M."/>
            <person name="Skelton J."/>
            <person name="Stevens K."/>
            <person name="Whitehead S."/>
            <person name="Barrell B.G."/>
        </authorList>
    </citation>
    <scope>NUCLEOTIDE SEQUENCE [LARGE SCALE GENOMIC DNA]</scope>
    <source>
        <strain>CO-92 / Biovar Orientalis</strain>
    </source>
</reference>
<reference key="2">
    <citation type="journal article" date="2002" name="J. Bacteriol.">
        <title>Genome sequence of Yersinia pestis KIM.</title>
        <authorList>
            <person name="Deng W."/>
            <person name="Burland V."/>
            <person name="Plunkett G. III"/>
            <person name="Boutin A."/>
            <person name="Mayhew G.F."/>
            <person name="Liss P."/>
            <person name="Perna N.T."/>
            <person name="Rose D.J."/>
            <person name="Mau B."/>
            <person name="Zhou S."/>
            <person name="Schwartz D.C."/>
            <person name="Fetherston J.D."/>
            <person name="Lindler L.E."/>
            <person name="Brubaker R.R."/>
            <person name="Plano G.V."/>
            <person name="Straley S.C."/>
            <person name="McDonough K.A."/>
            <person name="Nilles M.L."/>
            <person name="Matson J.S."/>
            <person name="Blattner F.R."/>
            <person name="Perry R.D."/>
        </authorList>
    </citation>
    <scope>NUCLEOTIDE SEQUENCE [LARGE SCALE GENOMIC DNA]</scope>
    <source>
        <strain>KIM10+ / Biovar Mediaevalis</strain>
    </source>
</reference>
<reference key="3">
    <citation type="journal article" date="2004" name="DNA Res.">
        <title>Complete genome sequence of Yersinia pestis strain 91001, an isolate avirulent to humans.</title>
        <authorList>
            <person name="Song Y."/>
            <person name="Tong Z."/>
            <person name="Wang J."/>
            <person name="Wang L."/>
            <person name="Guo Z."/>
            <person name="Han Y."/>
            <person name="Zhang J."/>
            <person name="Pei D."/>
            <person name="Zhou D."/>
            <person name="Qin H."/>
            <person name="Pang X."/>
            <person name="Han Y."/>
            <person name="Zhai J."/>
            <person name="Li M."/>
            <person name="Cui B."/>
            <person name="Qi Z."/>
            <person name="Jin L."/>
            <person name="Dai R."/>
            <person name="Chen F."/>
            <person name="Li S."/>
            <person name="Ye C."/>
            <person name="Du Z."/>
            <person name="Lin W."/>
            <person name="Wang J."/>
            <person name="Yu J."/>
            <person name="Yang H."/>
            <person name="Wang J."/>
            <person name="Huang P."/>
            <person name="Yang R."/>
        </authorList>
    </citation>
    <scope>NUCLEOTIDE SEQUENCE [LARGE SCALE GENOMIC DNA]</scope>
    <source>
        <strain>91001 / Biovar Mediaevalis</strain>
    </source>
</reference>
<dbReference type="EC" id="3.6.-.-" evidence="1"/>
<dbReference type="EMBL" id="AL590842">
    <property type="protein sequence ID" value="CAL22671.1"/>
    <property type="molecule type" value="Genomic_DNA"/>
</dbReference>
<dbReference type="EMBL" id="AE009952">
    <property type="protein sequence ID" value="AAM87660.1"/>
    <property type="molecule type" value="Genomic_DNA"/>
</dbReference>
<dbReference type="EMBL" id="AE017042">
    <property type="protein sequence ID" value="AAS64149.1"/>
    <property type="molecule type" value="Genomic_DNA"/>
</dbReference>
<dbReference type="PIR" id="AC0498">
    <property type="entry name" value="AC0498"/>
</dbReference>
<dbReference type="RefSeq" id="YP_002348954.1">
    <property type="nucleotide sequence ID" value="NC_003143.1"/>
</dbReference>
<dbReference type="SMR" id="Q8Z9U2"/>
<dbReference type="IntAct" id="Q8Z9U2">
    <property type="interactions" value="6"/>
</dbReference>
<dbReference type="STRING" id="214092.YPO4103"/>
<dbReference type="PaxDb" id="214092-YPO4103"/>
<dbReference type="DNASU" id="1149065"/>
<dbReference type="EnsemblBacteria" id="AAS64149">
    <property type="protein sequence ID" value="AAS64149"/>
    <property type="gene ID" value="YP_4010"/>
</dbReference>
<dbReference type="KEGG" id="ype:YPO4103"/>
<dbReference type="KEGG" id="ypk:y4118"/>
<dbReference type="KEGG" id="ypm:YP_4010"/>
<dbReference type="PATRIC" id="fig|214092.21.peg.4645"/>
<dbReference type="eggNOG" id="COG0486">
    <property type="taxonomic scope" value="Bacteria"/>
</dbReference>
<dbReference type="HOGENOM" id="CLU_019624_4_1_6"/>
<dbReference type="Proteomes" id="UP000000815">
    <property type="component" value="Chromosome"/>
</dbReference>
<dbReference type="Proteomes" id="UP000001019">
    <property type="component" value="Chromosome"/>
</dbReference>
<dbReference type="Proteomes" id="UP000002490">
    <property type="component" value="Chromosome"/>
</dbReference>
<dbReference type="GO" id="GO:0005737">
    <property type="term" value="C:cytoplasm"/>
    <property type="evidence" value="ECO:0000318"/>
    <property type="project" value="GO_Central"/>
</dbReference>
<dbReference type="GO" id="GO:0005829">
    <property type="term" value="C:cytosol"/>
    <property type="evidence" value="ECO:0000318"/>
    <property type="project" value="GO_Central"/>
</dbReference>
<dbReference type="GO" id="GO:0005525">
    <property type="term" value="F:GTP binding"/>
    <property type="evidence" value="ECO:0007669"/>
    <property type="project" value="UniProtKB-UniRule"/>
</dbReference>
<dbReference type="GO" id="GO:0003924">
    <property type="term" value="F:GTPase activity"/>
    <property type="evidence" value="ECO:0007669"/>
    <property type="project" value="UniProtKB-UniRule"/>
</dbReference>
<dbReference type="GO" id="GO:0046872">
    <property type="term" value="F:metal ion binding"/>
    <property type="evidence" value="ECO:0007669"/>
    <property type="project" value="UniProtKB-KW"/>
</dbReference>
<dbReference type="GO" id="GO:0030488">
    <property type="term" value="P:tRNA methylation"/>
    <property type="evidence" value="ECO:0000318"/>
    <property type="project" value="GO_Central"/>
</dbReference>
<dbReference type="GO" id="GO:0002098">
    <property type="term" value="P:tRNA wobble uridine modification"/>
    <property type="evidence" value="ECO:0000318"/>
    <property type="project" value="GO_Central"/>
</dbReference>
<dbReference type="CDD" id="cd04164">
    <property type="entry name" value="trmE"/>
    <property type="match status" value="1"/>
</dbReference>
<dbReference type="CDD" id="cd14858">
    <property type="entry name" value="TrmE_N"/>
    <property type="match status" value="1"/>
</dbReference>
<dbReference type="FunFam" id="3.30.1360.120:FF:000001">
    <property type="entry name" value="tRNA modification GTPase MnmE"/>
    <property type="match status" value="1"/>
</dbReference>
<dbReference type="FunFam" id="3.40.50.300:FF:000249">
    <property type="entry name" value="tRNA modification GTPase MnmE"/>
    <property type="match status" value="1"/>
</dbReference>
<dbReference type="Gene3D" id="3.40.50.300">
    <property type="entry name" value="P-loop containing nucleotide triphosphate hydrolases"/>
    <property type="match status" value="1"/>
</dbReference>
<dbReference type="Gene3D" id="3.30.1360.120">
    <property type="entry name" value="Probable tRNA modification gtpase trme, domain 1"/>
    <property type="match status" value="1"/>
</dbReference>
<dbReference type="Gene3D" id="1.20.120.430">
    <property type="entry name" value="tRNA modification GTPase MnmE domain 2"/>
    <property type="match status" value="1"/>
</dbReference>
<dbReference type="HAMAP" id="MF_00379">
    <property type="entry name" value="GTPase_MnmE"/>
    <property type="match status" value="1"/>
</dbReference>
<dbReference type="InterPro" id="IPR031168">
    <property type="entry name" value="G_TrmE"/>
</dbReference>
<dbReference type="InterPro" id="IPR006073">
    <property type="entry name" value="GTP-bd"/>
</dbReference>
<dbReference type="InterPro" id="IPR018948">
    <property type="entry name" value="GTP-bd_TrmE_N"/>
</dbReference>
<dbReference type="InterPro" id="IPR004520">
    <property type="entry name" value="GTPase_MnmE"/>
</dbReference>
<dbReference type="InterPro" id="IPR027368">
    <property type="entry name" value="MnmE_dom2"/>
</dbReference>
<dbReference type="InterPro" id="IPR025867">
    <property type="entry name" value="MnmE_helical"/>
</dbReference>
<dbReference type="InterPro" id="IPR027417">
    <property type="entry name" value="P-loop_NTPase"/>
</dbReference>
<dbReference type="InterPro" id="IPR005225">
    <property type="entry name" value="Small_GTP-bd"/>
</dbReference>
<dbReference type="InterPro" id="IPR027266">
    <property type="entry name" value="TrmE/GcvT_dom1"/>
</dbReference>
<dbReference type="NCBIfam" id="TIGR00450">
    <property type="entry name" value="mnmE_trmE_thdF"/>
    <property type="match status" value="1"/>
</dbReference>
<dbReference type="NCBIfam" id="NF003661">
    <property type="entry name" value="PRK05291.1-3"/>
    <property type="match status" value="1"/>
</dbReference>
<dbReference type="NCBIfam" id="TIGR00231">
    <property type="entry name" value="small_GTP"/>
    <property type="match status" value="1"/>
</dbReference>
<dbReference type="PANTHER" id="PTHR42714">
    <property type="entry name" value="TRNA MODIFICATION GTPASE GTPBP3"/>
    <property type="match status" value="1"/>
</dbReference>
<dbReference type="PANTHER" id="PTHR42714:SF2">
    <property type="entry name" value="TRNA MODIFICATION GTPASE GTPBP3, MITOCHONDRIAL"/>
    <property type="match status" value="1"/>
</dbReference>
<dbReference type="Pfam" id="PF01926">
    <property type="entry name" value="MMR_HSR1"/>
    <property type="match status" value="1"/>
</dbReference>
<dbReference type="Pfam" id="PF12631">
    <property type="entry name" value="MnmE_helical"/>
    <property type="match status" value="1"/>
</dbReference>
<dbReference type="Pfam" id="PF10396">
    <property type="entry name" value="TrmE_N"/>
    <property type="match status" value="1"/>
</dbReference>
<dbReference type="SUPFAM" id="SSF52540">
    <property type="entry name" value="P-loop containing nucleoside triphosphate hydrolases"/>
    <property type="match status" value="1"/>
</dbReference>
<dbReference type="SUPFAM" id="SSF116878">
    <property type="entry name" value="TrmE connector domain"/>
    <property type="match status" value="1"/>
</dbReference>
<dbReference type="PROSITE" id="PS51709">
    <property type="entry name" value="G_TRME"/>
    <property type="match status" value="1"/>
</dbReference>
<feature type="chain" id="PRO_0000188952" description="tRNA modification GTPase MnmE">
    <location>
        <begin position="1"/>
        <end position="454"/>
    </location>
</feature>
<feature type="domain" description="TrmE-type G">
    <location>
        <begin position="216"/>
        <end position="377"/>
    </location>
</feature>
<feature type="binding site" evidence="1">
    <location>
        <position position="23"/>
    </location>
    <ligand>
        <name>(6S)-5-formyl-5,6,7,8-tetrahydrofolate</name>
        <dbReference type="ChEBI" id="CHEBI:57457"/>
    </ligand>
</feature>
<feature type="binding site" evidence="1">
    <location>
        <position position="80"/>
    </location>
    <ligand>
        <name>(6S)-5-formyl-5,6,7,8-tetrahydrofolate</name>
        <dbReference type="ChEBI" id="CHEBI:57457"/>
    </ligand>
</feature>
<feature type="binding site" evidence="1">
    <location>
        <position position="120"/>
    </location>
    <ligand>
        <name>(6S)-5-formyl-5,6,7,8-tetrahydrofolate</name>
        <dbReference type="ChEBI" id="CHEBI:57457"/>
    </ligand>
</feature>
<feature type="binding site" evidence="1">
    <location>
        <begin position="226"/>
        <end position="231"/>
    </location>
    <ligand>
        <name>GTP</name>
        <dbReference type="ChEBI" id="CHEBI:37565"/>
    </ligand>
</feature>
<feature type="binding site" evidence="1">
    <location>
        <position position="226"/>
    </location>
    <ligand>
        <name>K(+)</name>
        <dbReference type="ChEBI" id="CHEBI:29103"/>
    </ligand>
</feature>
<feature type="binding site" evidence="1">
    <location>
        <position position="230"/>
    </location>
    <ligand>
        <name>Mg(2+)</name>
        <dbReference type="ChEBI" id="CHEBI:18420"/>
    </ligand>
</feature>
<feature type="binding site" evidence="1">
    <location>
        <begin position="245"/>
        <end position="251"/>
    </location>
    <ligand>
        <name>GTP</name>
        <dbReference type="ChEBI" id="CHEBI:37565"/>
    </ligand>
</feature>
<feature type="binding site" evidence="1">
    <location>
        <position position="245"/>
    </location>
    <ligand>
        <name>K(+)</name>
        <dbReference type="ChEBI" id="CHEBI:29103"/>
    </ligand>
</feature>
<feature type="binding site" evidence="1">
    <location>
        <position position="247"/>
    </location>
    <ligand>
        <name>K(+)</name>
        <dbReference type="ChEBI" id="CHEBI:29103"/>
    </ligand>
</feature>
<feature type="binding site" evidence="1">
    <location>
        <position position="250"/>
    </location>
    <ligand>
        <name>K(+)</name>
        <dbReference type="ChEBI" id="CHEBI:29103"/>
    </ligand>
</feature>
<feature type="binding site" evidence="1">
    <location>
        <position position="251"/>
    </location>
    <ligand>
        <name>Mg(2+)</name>
        <dbReference type="ChEBI" id="CHEBI:18420"/>
    </ligand>
</feature>
<feature type="binding site" evidence="1">
    <location>
        <begin position="270"/>
        <end position="273"/>
    </location>
    <ligand>
        <name>GTP</name>
        <dbReference type="ChEBI" id="CHEBI:37565"/>
    </ligand>
</feature>
<feature type="binding site" evidence="1">
    <location>
        <begin position="335"/>
        <end position="338"/>
    </location>
    <ligand>
        <name>GTP</name>
        <dbReference type="ChEBI" id="CHEBI:37565"/>
    </ligand>
</feature>
<feature type="binding site" evidence="1">
    <location>
        <begin position="358"/>
        <end position="360"/>
    </location>
    <ligand>
        <name>GTP</name>
        <dbReference type="ChEBI" id="CHEBI:37565"/>
    </ligand>
</feature>
<feature type="binding site" evidence="1">
    <location>
        <position position="454"/>
    </location>
    <ligand>
        <name>(6S)-5-formyl-5,6,7,8-tetrahydrofolate</name>
        <dbReference type="ChEBI" id="CHEBI:57457"/>
    </ligand>
</feature>
<feature type="sequence conflict" description="In Ref. 2 and 3." evidence="2" ref="2 3">
    <original>P</original>
    <variation>R</variation>
    <location>
        <position position="391"/>
    </location>
</feature>
<sequence length="454" mass="48978">MSTTDTIVAQATPPGRGGVGILRVSGRAASEVAHAVLGKLPKPRYADYLPFKDVDGSTLDQGIALYFPGPNSFTGEDVLELQGHGGPVILDLLLKRILALPGLRIARPGEFSERAFLNDKLDLAQAEAIADLIDASSEQAARSAVNSLQGAFSARIHQLVEALTHLRIYVEAAIDFPDEEIDFLSDGKIEGQLNGVMADLEQVRTEARQGSLLREGMKVVIAGRPNAGKSSLLNALAGREAAIVTDIAGTTRDVLREHIHIDGMPLHIIDTAGLREANDEVERIGIERAWNEIEQADRVLFMVDGTTTDATEPAAIWPEFMARLPATLPITVVRNKADITGETLGLTKVNGHSLIRLSARTGEGIDLLRDHLKQSMGFTSNTEGGFLARRPHLQALETAARHLIQGHEQLVSAYAGELLAEELRLAQQSLSEITGEFSSDDLLGRIFSSFCIGK</sequence>
<name>MNME_YERPE</name>
<evidence type="ECO:0000255" key="1">
    <source>
        <dbReference type="HAMAP-Rule" id="MF_00379"/>
    </source>
</evidence>
<evidence type="ECO:0000305" key="2"/>
<accession>Q8Z9U2</accession>
<accession>Q0W9T4</accession>
<proteinExistence type="inferred from homology"/>
<comment type="function">
    <text evidence="1">Exhibits a very high intrinsic GTPase hydrolysis rate. Involved in the addition of a carboxymethylaminomethyl (cmnm) group at the wobble position (U34) of certain tRNAs, forming tRNA-cmnm(5)s(2)U34.</text>
</comment>
<comment type="cofactor">
    <cofactor evidence="1">
        <name>K(+)</name>
        <dbReference type="ChEBI" id="CHEBI:29103"/>
    </cofactor>
    <text evidence="1">Binds 1 potassium ion per subunit.</text>
</comment>
<comment type="subunit">
    <text evidence="1">Homodimer. Heterotetramer of two MnmE and two MnmG subunits.</text>
</comment>
<comment type="subcellular location">
    <subcellularLocation>
        <location evidence="1">Cytoplasm</location>
    </subcellularLocation>
</comment>
<comment type="similarity">
    <text evidence="1">Belongs to the TRAFAC class TrmE-Era-EngA-EngB-Septin-like GTPase superfamily. TrmE GTPase family.</text>
</comment>
<organism>
    <name type="scientific">Yersinia pestis</name>
    <dbReference type="NCBI Taxonomy" id="632"/>
    <lineage>
        <taxon>Bacteria</taxon>
        <taxon>Pseudomonadati</taxon>
        <taxon>Pseudomonadota</taxon>
        <taxon>Gammaproteobacteria</taxon>
        <taxon>Enterobacterales</taxon>
        <taxon>Yersiniaceae</taxon>
        <taxon>Yersinia</taxon>
    </lineage>
</organism>
<keyword id="KW-0963">Cytoplasm</keyword>
<keyword id="KW-0342">GTP-binding</keyword>
<keyword id="KW-0378">Hydrolase</keyword>
<keyword id="KW-0460">Magnesium</keyword>
<keyword id="KW-0479">Metal-binding</keyword>
<keyword id="KW-0547">Nucleotide-binding</keyword>
<keyword id="KW-0630">Potassium</keyword>
<keyword id="KW-1185">Reference proteome</keyword>
<keyword id="KW-0819">tRNA processing</keyword>